<sequence length="47" mass="5552">MKKFRWVVLVVVVLACLLLWAQVFNMMCDQDVQFFSGICAINQFIPW</sequence>
<name>MGRB_ECO8A</name>
<dbReference type="EMBL" id="CU928160">
    <property type="protein sequence ID" value="CAQ98750.1"/>
    <property type="molecule type" value="Genomic_DNA"/>
</dbReference>
<dbReference type="RefSeq" id="WP_000714550.1">
    <property type="nucleotide sequence ID" value="NC_011741.1"/>
</dbReference>
<dbReference type="SMR" id="B7M2A1"/>
<dbReference type="GeneID" id="93776075"/>
<dbReference type="KEGG" id="ecr:ECIAI1_1896"/>
<dbReference type="HOGENOM" id="CLU_208030_1_0_6"/>
<dbReference type="GO" id="GO:0005886">
    <property type="term" value="C:plasma membrane"/>
    <property type="evidence" value="ECO:0007669"/>
    <property type="project" value="UniProtKB-SubCell"/>
</dbReference>
<dbReference type="GO" id="GO:0070298">
    <property type="term" value="P:negative regulation of phosphorelay signal transduction system"/>
    <property type="evidence" value="ECO:0007669"/>
    <property type="project" value="UniProtKB-UniRule"/>
</dbReference>
<dbReference type="HAMAP" id="MF_01596">
    <property type="entry name" value="MgrB"/>
    <property type="match status" value="1"/>
</dbReference>
<dbReference type="InterPro" id="IPR020907">
    <property type="entry name" value="MgrB"/>
</dbReference>
<dbReference type="NCBIfam" id="NF007635">
    <property type="entry name" value="PRK10299.1"/>
    <property type="match status" value="1"/>
</dbReference>
<dbReference type="Pfam" id="PF13998">
    <property type="entry name" value="MgrB"/>
    <property type="match status" value="1"/>
</dbReference>
<dbReference type="PROSITE" id="PS51257">
    <property type="entry name" value="PROKAR_LIPOPROTEIN"/>
    <property type="match status" value="1"/>
</dbReference>
<feature type="chain" id="PRO_1000201569" description="PhoP/PhoQ regulator MgrB">
    <location>
        <begin position="1"/>
        <end position="47"/>
    </location>
</feature>
<feature type="transmembrane region" description="Helical" evidence="1">
    <location>
        <begin position="6"/>
        <end position="26"/>
    </location>
</feature>
<keyword id="KW-0997">Cell inner membrane</keyword>
<keyword id="KW-1003">Cell membrane</keyword>
<keyword id="KW-0472">Membrane</keyword>
<keyword id="KW-0812">Transmembrane</keyword>
<keyword id="KW-1133">Transmembrane helix</keyword>
<accession>B7M2A1</accession>
<proteinExistence type="inferred from homology"/>
<comment type="function">
    <text evidence="1">PhoP-regulated transcription is redox-sensitive, being activated when the periplasm becomes more reducing. MgrB acts between DsbA/DsbB and PhoP/PhoQ in this pathway. Represses PhoP/PhoQ signaling, possibly by binding to the periplasmic domain of PhoQ, altering its activity and that of downstream effector PhoP.</text>
</comment>
<comment type="subunit">
    <text evidence="1">May form homooligomers. Probably interacts with the periplasmic domain of PhoQ.</text>
</comment>
<comment type="subcellular location">
    <subcellularLocation>
        <location evidence="1">Cell inner membrane</location>
        <topology evidence="1">Single-pass membrane protein</topology>
    </subcellularLocation>
</comment>
<comment type="similarity">
    <text evidence="1">Belongs to the MgrB family.</text>
</comment>
<protein>
    <recommendedName>
        <fullName evidence="1">PhoP/PhoQ regulator MgrB</fullName>
    </recommendedName>
</protein>
<organism>
    <name type="scientific">Escherichia coli O8 (strain IAI1)</name>
    <dbReference type="NCBI Taxonomy" id="585034"/>
    <lineage>
        <taxon>Bacteria</taxon>
        <taxon>Pseudomonadati</taxon>
        <taxon>Pseudomonadota</taxon>
        <taxon>Gammaproteobacteria</taxon>
        <taxon>Enterobacterales</taxon>
        <taxon>Enterobacteriaceae</taxon>
        <taxon>Escherichia</taxon>
    </lineage>
</organism>
<evidence type="ECO:0000255" key="1">
    <source>
        <dbReference type="HAMAP-Rule" id="MF_01596"/>
    </source>
</evidence>
<gene>
    <name evidence="1" type="primary">mgrB</name>
    <name type="ordered locus">ECIAI1_1896</name>
</gene>
<reference key="1">
    <citation type="journal article" date="2009" name="PLoS Genet.">
        <title>Organised genome dynamics in the Escherichia coli species results in highly diverse adaptive paths.</title>
        <authorList>
            <person name="Touchon M."/>
            <person name="Hoede C."/>
            <person name="Tenaillon O."/>
            <person name="Barbe V."/>
            <person name="Baeriswyl S."/>
            <person name="Bidet P."/>
            <person name="Bingen E."/>
            <person name="Bonacorsi S."/>
            <person name="Bouchier C."/>
            <person name="Bouvet O."/>
            <person name="Calteau A."/>
            <person name="Chiapello H."/>
            <person name="Clermont O."/>
            <person name="Cruveiller S."/>
            <person name="Danchin A."/>
            <person name="Diard M."/>
            <person name="Dossat C."/>
            <person name="Karoui M.E."/>
            <person name="Frapy E."/>
            <person name="Garry L."/>
            <person name="Ghigo J.M."/>
            <person name="Gilles A.M."/>
            <person name="Johnson J."/>
            <person name="Le Bouguenec C."/>
            <person name="Lescat M."/>
            <person name="Mangenot S."/>
            <person name="Martinez-Jehanne V."/>
            <person name="Matic I."/>
            <person name="Nassif X."/>
            <person name="Oztas S."/>
            <person name="Petit M.A."/>
            <person name="Pichon C."/>
            <person name="Rouy Z."/>
            <person name="Ruf C.S."/>
            <person name="Schneider D."/>
            <person name="Tourret J."/>
            <person name="Vacherie B."/>
            <person name="Vallenet D."/>
            <person name="Medigue C."/>
            <person name="Rocha E.P.C."/>
            <person name="Denamur E."/>
        </authorList>
    </citation>
    <scope>NUCLEOTIDE SEQUENCE [LARGE SCALE GENOMIC DNA]</scope>
    <source>
        <strain>IAI1</strain>
    </source>
</reference>